<reference key="1">
    <citation type="journal article" date="2000" name="DNA Res.">
        <title>Structural analysis of Arabidopsis thaliana chromosome 3. I. Sequence features of the regions of 4,504,864 bp covered by sixty P1 and TAC clones.</title>
        <authorList>
            <person name="Sato S."/>
            <person name="Nakamura Y."/>
            <person name="Kaneko T."/>
            <person name="Katoh T."/>
            <person name="Asamizu E."/>
            <person name="Tabata S."/>
        </authorList>
    </citation>
    <scope>NUCLEOTIDE SEQUENCE [LARGE SCALE GENOMIC DNA]</scope>
    <source>
        <strain>cv. Columbia</strain>
    </source>
</reference>
<reference key="2">
    <citation type="journal article" date="2017" name="Plant J.">
        <title>Araport11: a complete reannotation of the Arabidopsis thaliana reference genome.</title>
        <authorList>
            <person name="Cheng C.Y."/>
            <person name="Krishnakumar V."/>
            <person name="Chan A.P."/>
            <person name="Thibaud-Nissen F."/>
            <person name="Schobel S."/>
            <person name="Town C.D."/>
        </authorList>
    </citation>
    <scope>GENOME REANNOTATION</scope>
    <source>
        <strain>cv. Columbia</strain>
    </source>
</reference>
<reference key="3">
    <citation type="journal article" date="2003" name="Science">
        <title>Empirical analysis of transcriptional activity in the Arabidopsis genome.</title>
        <authorList>
            <person name="Yamada K."/>
            <person name="Lim J."/>
            <person name="Dale J.M."/>
            <person name="Chen H."/>
            <person name="Shinn P."/>
            <person name="Palm C.J."/>
            <person name="Southwick A.M."/>
            <person name="Wu H.C."/>
            <person name="Kim C.J."/>
            <person name="Nguyen M."/>
            <person name="Pham P.K."/>
            <person name="Cheuk R.F."/>
            <person name="Karlin-Newmann G."/>
            <person name="Liu S.X."/>
            <person name="Lam B."/>
            <person name="Sakano H."/>
            <person name="Wu T."/>
            <person name="Yu G."/>
            <person name="Miranda M."/>
            <person name="Quach H.L."/>
            <person name="Tripp M."/>
            <person name="Chang C.H."/>
            <person name="Lee J.M."/>
            <person name="Toriumi M.J."/>
            <person name="Chan M.M."/>
            <person name="Tang C.C."/>
            <person name="Onodera C.S."/>
            <person name="Deng J.M."/>
            <person name="Akiyama K."/>
            <person name="Ansari Y."/>
            <person name="Arakawa T."/>
            <person name="Banh J."/>
            <person name="Banno F."/>
            <person name="Bowser L."/>
            <person name="Brooks S.Y."/>
            <person name="Carninci P."/>
            <person name="Chao Q."/>
            <person name="Choy N."/>
            <person name="Enju A."/>
            <person name="Goldsmith A.D."/>
            <person name="Gurjal M."/>
            <person name="Hansen N.F."/>
            <person name="Hayashizaki Y."/>
            <person name="Johnson-Hopson C."/>
            <person name="Hsuan V.W."/>
            <person name="Iida K."/>
            <person name="Karnes M."/>
            <person name="Khan S."/>
            <person name="Koesema E."/>
            <person name="Ishida J."/>
            <person name="Jiang P.X."/>
            <person name="Jones T."/>
            <person name="Kawai J."/>
            <person name="Kamiya A."/>
            <person name="Meyers C."/>
            <person name="Nakajima M."/>
            <person name="Narusaka M."/>
            <person name="Seki M."/>
            <person name="Sakurai T."/>
            <person name="Satou M."/>
            <person name="Tamse R."/>
            <person name="Vaysberg M."/>
            <person name="Wallender E.K."/>
            <person name="Wong C."/>
            <person name="Yamamura Y."/>
            <person name="Yuan S."/>
            <person name="Shinozaki K."/>
            <person name="Davis R.W."/>
            <person name="Theologis A."/>
            <person name="Ecker J.R."/>
        </authorList>
    </citation>
    <scope>NUCLEOTIDE SEQUENCE [LARGE SCALE MRNA]</scope>
    <source>
        <strain>cv. Columbia</strain>
    </source>
</reference>
<reference key="4">
    <citation type="journal article" date="2001" name="Plant Cell">
        <title>Arabidopsis ALF5, a multidrug efflux transporter gene family member, confers resistance to toxins.</title>
        <authorList>
            <person name="Diener A.C."/>
            <person name="Gaxiola R.A."/>
            <person name="Fink G.R."/>
        </authorList>
    </citation>
    <scope>IDENTIFICATION</scope>
</reference>
<reference key="5">
    <citation type="journal article" date="2002" name="J. Biol. Chem.">
        <title>Functional cloning and characterization of a plant efflux carrier for multidrug and heavy metal detoxification.</title>
        <authorList>
            <person name="Li L."/>
            <person name="He Z."/>
            <person name="Pandey G.K."/>
            <person name="Tsuchiya T."/>
            <person name="Luan S."/>
        </authorList>
    </citation>
    <scope>GENE FAMILY</scope>
    <scope>NOMENCLATURE</scope>
</reference>
<reference key="6">
    <citation type="journal article" date="2003" name="Eur. J. Biochem.">
        <title>The multidrug/oligosaccharidyl-lipid/polysaccharide (MOP) exporter superfamily.</title>
        <authorList>
            <person name="Hvorup R.N."/>
            <person name="Winnen B."/>
            <person name="Chang A.B."/>
            <person name="Jiang Y."/>
            <person name="Zhou X.F."/>
            <person name="Saier M.H. Jr."/>
        </authorList>
    </citation>
    <scope>GENE FAMILY</scope>
</reference>
<gene>
    <name evidence="3" type="primary">DTX18</name>
    <name evidence="2" type="synonym">LAL5</name>
    <name evidence="5" type="ordered locus">At3g23550</name>
    <name evidence="6" type="ORF">MDB19.3</name>
</gene>
<name>DTX18_ARATH</name>
<evidence type="ECO:0000255" key="1"/>
<evidence type="ECO:0000303" key="2">
    <source>
    </source>
</evidence>
<evidence type="ECO:0000303" key="3">
    <source>
    </source>
</evidence>
<evidence type="ECO:0000305" key="4"/>
<evidence type="ECO:0000312" key="5">
    <source>
        <dbReference type="Araport" id="AT3G23550"/>
    </source>
</evidence>
<evidence type="ECO:0000312" key="6">
    <source>
        <dbReference type="EMBL" id="BAB02773.1"/>
    </source>
</evidence>
<accession>Q9LUH3</accession>
<keyword id="KW-0472">Membrane</keyword>
<keyword id="KW-1185">Reference proteome</keyword>
<keyword id="KW-0812">Transmembrane</keyword>
<keyword id="KW-1133">Transmembrane helix</keyword>
<keyword id="KW-0813">Transport</keyword>
<dbReference type="EMBL" id="AB023036">
    <property type="protein sequence ID" value="BAB02773.1"/>
    <property type="molecule type" value="Genomic_DNA"/>
</dbReference>
<dbReference type="EMBL" id="CP002686">
    <property type="protein sequence ID" value="AEE76776.1"/>
    <property type="molecule type" value="Genomic_DNA"/>
</dbReference>
<dbReference type="EMBL" id="AY070032">
    <property type="protein sequence ID" value="AAL49789.1"/>
    <property type="molecule type" value="mRNA"/>
</dbReference>
<dbReference type="EMBL" id="AY096384">
    <property type="protein sequence ID" value="AAM20025.1"/>
    <property type="molecule type" value="mRNA"/>
</dbReference>
<dbReference type="RefSeq" id="NP_188997.1">
    <property type="nucleotide sequence ID" value="NM_113258.5"/>
</dbReference>
<dbReference type="SMR" id="Q9LUH3"/>
<dbReference type="FunCoup" id="Q9LUH3">
    <property type="interactions" value="305"/>
</dbReference>
<dbReference type="STRING" id="3702.Q9LUH3"/>
<dbReference type="PaxDb" id="3702-AT3G23550.1"/>
<dbReference type="ProteomicsDB" id="220718"/>
<dbReference type="EnsemblPlants" id="AT3G23550.1">
    <property type="protein sequence ID" value="AT3G23550.1"/>
    <property type="gene ID" value="AT3G23550"/>
</dbReference>
<dbReference type="GeneID" id="821934"/>
<dbReference type="Gramene" id="AT3G23550.1">
    <property type="protein sequence ID" value="AT3G23550.1"/>
    <property type="gene ID" value="AT3G23550"/>
</dbReference>
<dbReference type="KEGG" id="ath:AT3G23550"/>
<dbReference type="Araport" id="AT3G23550"/>
<dbReference type="TAIR" id="AT3G23550">
    <property type="gene designation" value="DTX18"/>
</dbReference>
<dbReference type="eggNOG" id="KOG1347">
    <property type="taxonomic scope" value="Eukaryota"/>
</dbReference>
<dbReference type="HOGENOM" id="CLU_012893_1_0_1"/>
<dbReference type="InParanoid" id="Q9LUH3"/>
<dbReference type="OMA" id="MCENTEA"/>
<dbReference type="PhylomeDB" id="Q9LUH3"/>
<dbReference type="PRO" id="PR:Q9LUH3"/>
<dbReference type="Proteomes" id="UP000006548">
    <property type="component" value="Chromosome 3"/>
</dbReference>
<dbReference type="ExpressionAtlas" id="Q9LUH3">
    <property type="expression patterns" value="baseline and differential"/>
</dbReference>
<dbReference type="GO" id="GO:0016020">
    <property type="term" value="C:membrane"/>
    <property type="evidence" value="ECO:0007669"/>
    <property type="project" value="UniProtKB-SubCell"/>
</dbReference>
<dbReference type="GO" id="GO:0015297">
    <property type="term" value="F:antiporter activity"/>
    <property type="evidence" value="ECO:0007669"/>
    <property type="project" value="InterPro"/>
</dbReference>
<dbReference type="GO" id="GO:0042910">
    <property type="term" value="F:xenobiotic transmembrane transporter activity"/>
    <property type="evidence" value="ECO:0007669"/>
    <property type="project" value="InterPro"/>
</dbReference>
<dbReference type="GO" id="GO:0002229">
    <property type="term" value="P:defense response to oomycetes"/>
    <property type="evidence" value="ECO:0000315"/>
    <property type="project" value="TAIR"/>
</dbReference>
<dbReference type="GO" id="GO:0098542">
    <property type="term" value="P:defense response to other organism"/>
    <property type="evidence" value="ECO:0000270"/>
    <property type="project" value="TAIR"/>
</dbReference>
<dbReference type="GO" id="GO:1990961">
    <property type="term" value="P:xenobiotic detoxification by transmembrane export across the plasma membrane"/>
    <property type="evidence" value="ECO:0007669"/>
    <property type="project" value="InterPro"/>
</dbReference>
<dbReference type="CDD" id="cd13132">
    <property type="entry name" value="MATE_eukaryotic"/>
    <property type="match status" value="1"/>
</dbReference>
<dbReference type="InterPro" id="IPR045069">
    <property type="entry name" value="MATE_euk"/>
</dbReference>
<dbReference type="InterPro" id="IPR002528">
    <property type="entry name" value="MATE_fam"/>
</dbReference>
<dbReference type="NCBIfam" id="TIGR00797">
    <property type="entry name" value="matE"/>
    <property type="match status" value="1"/>
</dbReference>
<dbReference type="PANTHER" id="PTHR11206">
    <property type="entry name" value="MULTIDRUG RESISTANCE PROTEIN"/>
    <property type="match status" value="1"/>
</dbReference>
<dbReference type="Pfam" id="PF01554">
    <property type="entry name" value="MatE"/>
    <property type="match status" value="2"/>
</dbReference>
<feature type="chain" id="PRO_0000405318" description="Protein DETOXIFICATION 18">
    <location>
        <begin position="1"/>
        <end position="469"/>
    </location>
</feature>
<feature type="transmembrane region" description="Helical" evidence="1">
    <location>
        <begin position="40"/>
        <end position="60"/>
    </location>
</feature>
<feature type="transmembrane region" description="Helical" evidence="1">
    <location>
        <begin position="73"/>
        <end position="93"/>
    </location>
</feature>
<feature type="transmembrane region" description="Helical" evidence="1">
    <location>
        <begin position="121"/>
        <end position="141"/>
    </location>
</feature>
<feature type="transmembrane region" description="Helical" evidence="1">
    <location>
        <begin position="152"/>
        <end position="172"/>
    </location>
</feature>
<feature type="transmembrane region" description="Helical" evidence="1">
    <location>
        <begin position="183"/>
        <end position="203"/>
    </location>
</feature>
<feature type="transmembrane region" description="Helical" evidence="1">
    <location>
        <begin position="206"/>
        <end position="226"/>
    </location>
</feature>
<feature type="transmembrane region" description="Helical" evidence="1">
    <location>
        <begin position="252"/>
        <end position="274"/>
    </location>
</feature>
<feature type="transmembrane region" description="Helical" evidence="1">
    <location>
        <begin position="293"/>
        <end position="313"/>
    </location>
</feature>
<feature type="transmembrane region" description="Helical" evidence="1">
    <location>
        <begin position="344"/>
        <end position="364"/>
    </location>
</feature>
<feature type="transmembrane region" description="Helical" evidence="1">
    <location>
        <begin position="374"/>
        <end position="394"/>
    </location>
</feature>
<feature type="transmembrane region" description="Helical" evidence="1">
    <location>
        <begin position="406"/>
        <end position="426"/>
    </location>
</feature>
<feature type="transmembrane region" description="Helical" evidence="1">
    <location>
        <begin position="438"/>
        <end position="458"/>
    </location>
</feature>
<proteinExistence type="evidence at transcript level"/>
<sequence length="469" mass="50792">MADPTSKDDHDGEGGRDKSSTFVQKLIDVEEAKTQIIYSLPMIFTNLFYYCIPLTSVMFASQLGQLELAGATLANSWATVTGFAFMTGLSGALETLCGQGFGAKSYRMLGIHLQSSCIVSLVFTILITILWFFTESVFLLLRQDPSISKQAALYMKYLAPGLLAYGFLQNILRFCQTQCIVTPLVLFSFLPLVINIGTTYALVHLAGLGFIGAPIATSISLWIAFVSLGFYVICSDKFKETWTGFSMESFHHVVLNLTLSIPSAAMVCLEYWAFEILVFLAGLMRNPEITTSLVAICVNTESISYMLTCGLSAATSTRVSNELGAGNVKGAKKATSVSVKLSLVLALGVVIAILVGHDAWVGLFSNSHVIKEGFASLRFFLAASITLDSIQGVLSGVARGCGWQRLATVINLGTFYLIGMPISVLCGFKLKLHAKGLWIGLICGMFCQSASLLLMTIFRKWTKLTAATV</sequence>
<comment type="subcellular location">
    <subcellularLocation>
        <location evidence="1">Membrane</location>
        <topology evidence="1">Multi-pass membrane protein</topology>
    </subcellularLocation>
</comment>
<comment type="similarity">
    <text evidence="4">Belongs to the multi antimicrobial extrusion (MATE) (TC 2.A.66.1) family.</text>
</comment>
<organism>
    <name type="scientific">Arabidopsis thaliana</name>
    <name type="common">Mouse-ear cress</name>
    <dbReference type="NCBI Taxonomy" id="3702"/>
    <lineage>
        <taxon>Eukaryota</taxon>
        <taxon>Viridiplantae</taxon>
        <taxon>Streptophyta</taxon>
        <taxon>Embryophyta</taxon>
        <taxon>Tracheophyta</taxon>
        <taxon>Spermatophyta</taxon>
        <taxon>Magnoliopsida</taxon>
        <taxon>eudicotyledons</taxon>
        <taxon>Gunneridae</taxon>
        <taxon>Pentapetalae</taxon>
        <taxon>rosids</taxon>
        <taxon>malvids</taxon>
        <taxon>Brassicales</taxon>
        <taxon>Brassicaceae</taxon>
        <taxon>Camelineae</taxon>
        <taxon>Arabidopsis</taxon>
    </lineage>
</organism>
<protein>
    <recommendedName>
        <fullName evidence="3">Protein DETOXIFICATION 18</fullName>
        <shortName evidence="3">AtDTX18</shortName>
    </recommendedName>
    <alternativeName>
        <fullName evidence="4">Multidrug and toxic compound extrusion protein 18</fullName>
        <shortName evidence="4">MATE protein 18</shortName>
    </alternativeName>
    <alternativeName>
        <fullName evidence="2">Protein LIKE ALF5</fullName>
    </alternativeName>
</protein>